<reference key="1">
    <citation type="journal article" date="1990" name="Proc. Natl. Acad. Sci. U.S.A.">
        <title>Isolation and expression of rat liver sepiapterin reductase cDNA.</title>
        <authorList>
            <person name="Citron B.A."/>
            <person name="Milstien S."/>
            <person name="Gutierrez J.C."/>
            <person name="Levine R.A."/>
            <person name="Yanak B.L."/>
            <person name="Kaufman S."/>
        </authorList>
    </citation>
    <scope>NUCLEOTIDE SEQUENCE [MRNA]</scope>
    <scope>PARTIAL PROTEIN SEQUENCE</scope>
    <source>
        <tissue>Liver</tissue>
    </source>
</reference>
<reference key="2">
    <citation type="journal article" date="1990" name="Biochem. Biophys. Res. Commun.">
        <title>The complete amino acid sequence of the mature form of rat sepiapterin reductase.</title>
        <authorList>
            <person name="Oyama R."/>
            <person name="Katoh S."/>
            <person name="Sueoka T."/>
            <person name="Suzuki M."/>
            <person name="Ichinose H."/>
            <person name="Nagatsu T."/>
            <person name="Titani K."/>
        </authorList>
    </citation>
    <scope>PROTEIN SEQUENCE</scope>
    <scope>ACETYLATION AT MET-1</scope>
</reference>
<reference key="3">
    <citation type="journal article" date="1999" name="Biochim. Biophys. Acta">
        <title>Functionally important residues tyrosine-171 and serine-158 in sepiapterin reductase.</title>
        <authorList>
            <person name="Fujimoto K."/>
            <person name="Ichinose H."/>
            <person name="Nagatsu T."/>
            <person name="Nonaka T."/>
            <person name="Mitsui Y."/>
            <person name="Katoh S."/>
        </authorList>
    </citation>
    <scope>MUTAGENESIS OF ALA-29; SER-158; TYR-171 AND LYS-175</scope>
    <scope>CATALYTIC ACTIVITY</scope>
    <scope>BIOPHYSICOCHEMICAL PROPERTIES</scope>
</reference>
<reference key="4">
    <citation type="journal article" date="2002" name="Biochim. Biophys. Acta">
        <title>Mutational analysis of sites in sepiapterin reductase phosphorylated by Ca2+/calmodulin-dependent protein kinase II.</title>
        <authorList>
            <person name="Fujimoto K."/>
            <person name="Takahashi S.Y."/>
            <person name="Katoh S."/>
        </authorList>
    </citation>
    <scope>KINETIC PARAMETERS</scope>
    <scope>PHOSPHORYLATION AT SER-46; SER-196 AND SER-214</scope>
    <scope>MUTAGENESIS OF SER-46; SER-196 AND SER-214</scope>
</reference>
<reference key="5">
    <citation type="journal article" date="2012" name="Nat. Commun.">
        <title>Quantitative maps of protein phosphorylation sites across 14 different rat organs and tissues.</title>
        <authorList>
            <person name="Lundby A."/>
            <person name="Secher A."/>
            <person name="Lage K."/>
            <person name="Nordsborg N.B."/>
            <person name="Dmytriyev A."/>
            <person name="Lundby C."/>
            <person name="Olsen J.V."/>
        </authorList>
    </citation>
    <scope>PHOSPHORYLATION [LARGE SCALE ANALYSIS] AT SER-33</scope>
    <scope>IDENTIFICATION BY MASS SPECTROMETRY [LARGE SCALE ANALYSIS]</scope>
</reference>
<evidence type="ECO:0000250" key="1"/>
<evidence type="ECO:0000269" key="2">
    <source>
    </source>
</evidence>
<evidence type="ECO:0000269" key="3">
    <source>
    </source>
</evidence>
<evidence type="ECO:0000269" key="4">
    <source>
    </source>
</evidence>
<evidence type="ECO:0000305" key="5"/>
<evidence type="ECO:0000305" key="6">
    <source>
    </source>
</evidence>
<evidence type="ECO:0007744" key="7">
    <source>
    </source>
</evidence>
<feature type="chain" id="PRO_0000072151" description="Sepiapterin reductase">
    <location>
        <begin position="1"/>
        <end position="262"/>
    </location>
</feature>
<feature type="binding site" evidence="1">
    <location>
        <begin position="15"/>
        <end position="21"/>
    </location>
    <ligand>
        <name>NADP(+)</name>
        <dbReference type="ChEBI" id="CHEBI:58349"/>
    </ligand>
</feature>
<feature type="binding site" evidence="1">
    <location>
        <begin position="43"/>
        <end position="44"/>
    </location>
    <ligand>
        <name>NADP(+)</name>
        <dbReference type="ChEBI" id="CHEBI:58349"/>
    </ligand>
</feature>
<feature type="binding site" evidence="1">
    <location>
        <begin position="70"/>
        <end position="71"/>
    </location>
    <ligand>
        <name>NADP(+)</name>
        <dbReference type="ChEBI" id="CHEBI:58349"/>
    </ligand>
</feature>
<feature type="binding site" evidence="1">
    <location>
        <begin position="158"/>
        <end position="159"/>
    </location>
    <ligand>
        <name>substrate</name>
    </ligand>
</feature>
<feature type="binding site" evidence="1">
    <location>
        <position position="171"/>
    </location>
    <ligand>
        <name>substrate</name>
    </ligand>
</feature>
<feature type="binding site" evidence="1">
    <location>
        <position position="175"/>
    </location>
    <ligand>
        <name>NADP(+)</name>
        <dbReference type="ChEBI" id="CHEBI:58349"/>
    </ligand>
</feature>
<feature type="binding site" evidence="1">
    <location>
        <position position="200"/>
    </location>
    <ligand>
        <name>substrate</name>
    </ligand>
</feature>
<feature type="binding site" evidence="1">
    <location>
        <begin position="202"/>
        <end position="207"/>
    </location>
    <ligand>
        <name>NADP(+)</name>
        <dbReference type="ChEBI" id="CHEBI:58349"/>
    </ligand>
</feature>
<feature type="binding site" evidence="1">
    <location>
        <position position="258"/>
    </location>
    <ligand>
        <name>substrate</name>
    </ligand>
</feature>
<feature type="modified residue" description="N-acetylmethionine" evidence="4">
    <location>
        <position position="1"/>
    </location>
</feature>
<feature type="modified residue" description="Phosphoserine" evidence="7">
    <location>
        <position position="33"/>
    </location>
</feature>
<feature type="modified residue" description="Phosphoserine; by CaMK2; in vitro" evidence="3">
    <location>
        <position position="46"/>
    </location>
</feature>
<feature type="modified residue" description="Phosphoserine; by CaMK2; in vitro" evidence="3">
    <location>
        <position position="196"/>
    </location>
</feature>
<feature type="modified residue" description="Phosphoserine; by CaMK2; in vitro" evidence="3">
    <location>
        <position position="214"/>
    </location>
</feature>
<feature type="mutagenesis site" description="Reduces affinity for NADP and for sepiapterin 4-fold." evidence="2">
    <original>A</original>
    <variation>V</variation>
    <location>
        <position position="29"/>
    </location>
</feature>
<feature type="mutagenesis site" description="Abolishes phosphorylation by CaMK2. No effect on kinetic parameters; when associated with A-196 and A-214." evidence="3">
    <original>S</original>
    <variation>A</variation>
    <location>
        <position position="46"/>
    </location>
</feature>
<feature type="mutagenesis site" description="Reduces activity 4-fold. Loss of activity; when associated with V-171." evidence="2">
    <original>S</original>
    <variation>D</variation>
    <location>
        <position position="158"/>
    </location>
</feature>
<feature type="mutagenesis site" description="Reduces activity 4-fold. Loss of activity; when associated with V-171." evidence="2">
    <original>Y</original>
    <variation>V</variation>
    <location>
        <position position="171"/>
    </location>
</feature>
<feature type="mutagenesis site" description="Reduces activity 4-fold." evidence="2">
    <original>K</original>
    <variation>I</variation>
    <location>
        <position position="175"/>
    </location>
</feature>
<feature type="mutagenesis site" description="Abolishes phosphorylation by CaMK2. No effect on kinetic parameters; when associated with A-46 and A-214." evidence="3">
    <original>S</original>
    <variation>A</variation>
    <location>
        <position position="196"/>
    </location>
</feature>
<feature type="mutagenesis site" description="Abolishes phosphorylation by CaMK2. No effect on kinetic parameters; when associated with A-46 and A-196." evidence="3">
    <original>S</original>
    <variation>A</variation>
    <location>
        <position position="214"/>
    </location>
</feature>
<proteinExistence type="evidence at protein level"/>
<comment type="function">
    <text>Catalyzes the final one or two reductions in tetra-hydrobiopterin biosynthesis to form 5,6,7,8-tetrahydrobiopterin.</text>
</comment>
<comment type="catalytic activity">
    <reaction evidence="2">
        <text>L-erythro-7,8-dihydrobiopterin + NADP(+) = L-sepiapterin + NADPH + H(+)</text>
        <dbReference type="Rhea" id="RHEA:18953"/>
        <dbReference type="ChEBI" id="CHEBI:15378"/>
        <dbReference type="ChEBI" id="CHEBI:43029"/>
        <dbReference type="ChEBI" id="CHEBI:57783"/>
        <dbReference type="ChEBI" id="CHEBI:58349"/>
        <dbReference type="ChEBI" id="CHEBI:194527"/>
        <dbReference type="EC" id="1.1.1.153"/>
    </reaction>
    <physiologicalReaction direction="right-to-left" evidence="2">
        <dbReference type="Rhea" id="RHEA:18955"/>
    </physiologicalReaction>
</comment>
<comment type="catalytic activity">
    <reaction evidence="6">
        <text>(6R)-L-erythro-5,6,7,8-tetrahydrobiopterin + 2 NADP(+) = 6-pyruvoyl-5,6,7,8-tetrahydropterin + 2 NADPH + 2 H(+)</text>
        <dbReference type="Rhea" id="RHEA:32627"/>
        <dbReference type="ChEBI" id="CHEBI:15378"/>
        <dbReference type="ChEBI" id="CHEBI:57783"/>
        <dbReference type="ChEBI" id="CHEBI:58349"/>
        <dbReference type="ChEBI" id="CHEBI:59560"/>
        <dbReference type="ChEBI" id="CHEBI:136564"/>
        <dbReference type="EC" id="1.1.1.153"/>
    </reaction>
    <physiologicalReaction direction="right-to-left" evidence="6">
        <dbReference type="Rhea" id="RHEA:32629"/>
    </physiologicalReaction>
</comment>
<comment type="biophysicochemical properties">
    <kinetics>
        <KM evidence="2 3">12.6 uM for sepiapterin</KM>
        <KM evidence="2 3">2.8 uM for NADPH</KM>
        <text evidence="2">kcat is 9.7 sec(-1) with sepiapterin as substrate (PubMed:10350607). kcat is 11.1 sec(-1) with NADPH as substrate (PubMed:10350607).</text>
    </kinetics>
</comment>
<comment type="subunit">
    <text>Homodimer.</text>
</comment>
<comment type="subcellular location">
    <subcellularLocation>
        <location>Cytoplasm</location>
    </subcellularLocation>
</comment>
<comment type="PTM">
    <text evidence="3">In vitro phosphorylation of Ser-46, Ser-196 and Ser-214 by CaMK2 does not change kinetic parameters.</text>
</comment>
<comment type="similarity">
    <text evidence="5">Belongs to the sepiapterin reductase family.</text>
</comment>
<accession>P18297</accession>
<keyword id="KW-0007">Acetylation</keyword>
<keyword id="KW-0963">Cytoplasm</keyword>
<keyword id="KW-0903">Direct protein sequencing</keyword>
<keyword id="KW-0521">NADP</keyword>
<keyword id="KW-0560">Oxidoreductase</keyword>
<keyword id="KW-0597">Phosphoprotein</keyword>
<keyword id="KW-1185">Reference proteome</keyword>
<gene>
    <name type="primary">Spr</name>
</gene>
<name>SPRE_RAT</name>
<protein>
    <recommendedName>
        <fullName>Sepiapterin reductase</fullName>
        <shortName>SPR</shortName>
        <ecNumber evidence="2">1.1.1.153</ecNumber>
    </recommendedName>
</protein>
<organism>
    <name type="scientific">Rattus norvegicus</name>
    <name type="common">Rat</name>
    <dbReference type="NCBI Taxonomy" id="10116"/>
    <lineage>
        <taxon>Eukaryota</taxon>
        <taxon>Metazoa</taxon>
        <taxon>Chordata</taxon>
        <taxon>Craniata</taxon>
        <taxon>Vertebrata</taxon>
        <taxon>Euteleostomi</taxon>
        <taxon>Mammalia</taxon>
        <taxon>Eutheria</taxon>
        <taxon>Euarchontoglires</taxon>
        <taxon>Glires</taxon>
        <taxon>Rodentia</taxon>
        <taxon>Myomorpha</taxon>
        <taxon>Muroidea</taxon>
        <taxon>Muridae</taxon>
        <taxon>Murinae</taxon>
        <taxon>Rattus</taxon>
    </lineage>
</organism>
<dbReference type="EC" id="1.1.1.153" evidence="2"/>
<dbReference type="EMBL" id="M36410">
    <property type="protein sequence ID" value="AAA42130.1"/>
    <property type="molecule type" value="mRNA"/>
</dbReference>
<dbReference type="PIR" id="A36024">
    <property type="entry name" value="A36024"/>
</dbReference>
<dbReference type="RefSeq" id="NP_062054.1">
    <property type="nucleotide sequence ID" value="NM_019181.2"/>
</dbReference>
<dbReference type="SMR" id="P18297"/>
<dbReference type="FunCoup" id="P18297">
    <property type="interactions" value="414"/>
</dbReference>
<dbReference type="STRING" id="10116.ENSRNOP00000020749"/>
<dbReference type="iPTMnet" id="P18297"/>
<dbReference type="PhosphoSitePlus" id="P18297"/>
<dbReference type="jPOST" id="P18297"/>
<dbReference type="PaxDb" id="10116-ENSRNOP00000020749"/>
<dbReference type="Ensembl" id="ENSRNOT00000020749.7">
    <property type="protein sequence ID" value="ENSRNOP00000020749.4"/>
    <property type="gene ID" value="ENSRNOG00000015455.7"/>
</dbReference>
<dbReference type="GeneID" id="29270"/>
<dbReference type="KEGG" id="rno:29270"/>
<dbReference type="UCSC" id="RGD:3753">
    <property type="organism name" value="rat"/>
</dbReference>
<dbReference type="AGR" id="RGD:3753"/>
<dbReference type="CTD" id="6697"/>
<dbReference type="RGD" id="3753">
    <property type="gene designation" value="Spr"/>
</dbReference>
<dbReference type="eggNOG" id="KOG1204">
    <property type="taxonomic scope" value="Eukaryota"/>
</dbReference>
<dbReference type="GeneTree" id="ENSGT00440000033609"/>
<dbReference type="HOGENOM" id="CLU_010194_2_11_1"/>
<dbReference type="InParanoid" id="P18297"/>
<dbReference type="OMA" id="FKGWTLY"/>
<dbReference type="OrthoDB" id="153074at2759"/>
<dbReference type="PhylomeDB" id="P18297"/>
<dbReference type="TreeFam" id="TF326358"/>
<dbReference type="BRENDA" id="1.1.1.153">
    <property type="organism ID" value="5301"/>
</dbReference>
<dbReference type="Reactome" id="R-RNO-1474151">
    <property type="pathway name" value="Tetrahydrobiopterin (BH4) synthesis, recycling, salvage and regulation"/>
</dbReference>
<dbReference type="Reactome" id="R-RNO-203615">
    <property type="pathway name" value="eNOS activation"/>
</dbReference>
<dbReference type="SABIO-RK" id="P18297"/>
<dbReference type="PRO" id="PR:P18297"/>
<dbReference type="Proteomes" id="UP000002494">
    <property type="component" value="Chromosome 4"/>
</dbReference>
<dbReference type="Bgee" id="ENSRNOG00000015455">
    <property type="expression patterns" value="Expressed in liver and 19 other cell types or tissues"/>
</dbReference>
<dbReference type="ExpressionAtlas" id="P18297">
    <property type="expression patterns" value="baseline and differential"/>
</dbReference>
<dbReference type="GO" id="GO:0005737">
    <property type="term" value="C:cytoplasm"/>
    <property type="evidence" value="ECO:0007669"/>
    <property type="project" value="UniProtKB-SubCell"/>
</dbReference>
<dbReference type="GO" id="GO:0042803">
    <property type="term" value="F:protein homodimerization activity"/>
    <property type="evidence" value="ECO:0000266"/>
    <property type="project" value="RGD"/>
</dbReference>
<dbReference type="GO" id="GO:0004757">
    <property type="term" value="F:sepiapterin reductase (NADP+) activity"/>
    <property type="evidence" value="ECO:0000314"/>
    <property type="project" value="UniProtKB"/>
</dbReference>
<dbReference type="GO" id="GO:0048667">
    <property type="term" value="P:cell morphogenesis involved in neuron differentiation"/>
    <property type="evidence" value="ECO:0000266"/>
    <property type="project" value="RGD"/>
</dbReference>
<dbReference type="GO" id="GO:0042417">
    <property type="term" value="P:dopamine metabolic process"/>
    <property type="evidence" value="ECO:0000266"/>
    <property type="project" value="RGD"/>
</dbReference>
<dbReference type="GO" id="GO:0006558">
    <property type="term" value="P:L-phenylalanine metabolic process"/>
    <property type="evidence" value="ECO:0000266"/>
    <property type="project" value="RGD"/>
</dbReference>
<dbReference type="GO" id="GO:0006809">
    <property type="term" value="P:nitric oxide biosynthetic process"/>
    <property type="evidence" value="ECO:0000266"/>
    <property type="project" value="RGD"/>
</dbReference>
<dbReference type="GO" id="GO:0042415">
    <property type="term" value="P:norepinephrine metabolic process"/>
    <property type="evidence" value="ECO:0000266"/>
    <property type="project" value="RGD"/>
</dbReference>
<dbReference type="GO" id="GO:0008284">
    <property type="term" value="P:positive regulation of cell population proliferation"/>
    <property type="evidence" value="ECO:0000315"/>
    <property type="project" value="RGD"/>
</dbReference>
<dbReference type="GO" id="GO:0019889">
    <property type="term" value="P:pteridine metabolic process"/>
    <property type="evidence" value="ECO:0000266"/>
    <property type="project" value="RGD"/>
</dbReference>
<dbReference type="GO" id="GO:0040014">
    <property type="term" value="P:regulation of multicellular organism growth"/>
    <property type="evidence" value="ECO:0000266"/>
    <property type="project" value="RGD"/>
</dbReference>
<dbReference type="GO" id="GO:0042428">
    <property type="term" value="P:serotonin metabolic process"/>
    <property type="evidence" value="ECO:0000266"/>
    <property type="project" value="RGD"/>
</dbReference>
<dbReference type="GO" id="GO:0006729">
    <property type="term" value="P:tetrahydrobiopterin biosynthetic process"/>
    <property type="evidence" value="ECO:0000315"/>
    <property type="project" value="RGD"/>
</dbReference>
<dbReference type="GO" id="GO:0046146">
    <property type="term" value="P:tetrahydrobiopterin metabolic process"/>
    <property type="evidence" value="ECO:0000266"/>
    <property type="project" value="RGD"/>
</dbReference>
<dbReference type="GO" id="GO:0050882">
    <property type="term" value="P:voluntary musculoskeletal movement"/>
    <property type="evidence" value="ECO:0000266"/>
    <property type="project" value="RGD"/>
</dbReference>
<dbReference type="CDD" id="cd05367">
    <property type="entry name" value="SPR-like_SDR_c"/>
    <property type="match status" value="1"/>
</dbReference>
<dbReference type="FunFam" id="3.40.50.720:FF:000259">
    <property type="entry name" value="Sepiapterin reductase"/>
    <property type="match status" value="1"/>
</dbReference>
<dbReference type="Gene3D" id="3.40.50.720">
    <property type="entry name" value="NAD(P)-binding Rossmann-like Domain"/>
    <property type="match status" value="1"/>
</dbReference>
<dbReference type="InterPro" id="IPR051721">
    <property type="entry name" value="Biopterin_syn/organic_redct"/>
</dbReference>
<dbReference type="InterPro" id="IPR036291">
    <property type="entry name" value="NAD(P)-bd_dom_sf"/>
</dbReference>
<dbReference type="InterPro" id="IPR002347">
    <property type="entry name" value="SDR_fam"/>
</dbReference>
<dbReference type="InterPro" id="IPR006393">
    <property type="entry name" value="Sepiapterin_red"/>
</dbReference>
<dbReference type="NCBIfam" id="TIGR01500">
    <property type="entry name" value="sepiapter_red"/>
    <property type="match status" value="1"/>
</dbReference>
<dbReference type="PANTHER" id="PTHR44085">
    <property type="entry name" value="SEPIAPTERIN REDUCTASE"/>
    <property type="match status" value="1"/>
</dbReference>
<dbReference type="PANTHER" id="PTHR44085:SF2">
    <property type="entry name" value="SEPIAPTERIN REDUCTASE"/>
    <property type="match status" value="1"/>
</dbReference>
<dbReference type="Pfam" id="PF00106">
    <property type="entry name" value="adh_short"/>
    <property type="match status" value="1"/>
</dbReference>
<dbReference type="PRINTS" id="PR00081">
    <property type="entry name" value="GDHRDH"/>
</dbReference>
<dbReference type="SUPFAM" id="SSF51735">
    <property type="entry name" value="NAD(P)-binding Rossmann-fold domains"/>
    <property type="match status" value="1"/>
</dbReference>
<sequence>MEGGRLGCAVCVLTGASRGFGRALAPQLAGLLSPGSVLLLSARSDSMLRQLKEELCTQQPGLQVVLAAADLGTESGVQQLLSAVRELPRPERLQRLLLINNAGTLGDVSKGFLNINDLAEVNNYWALNLTSMLCLTTGTLNAFSNSPGLSKTVVNISSLCALQPFKGWGLYCAGKAARDMLYQVLAVEEPSVRVLSYAPGPLDTNMQQLARETSMDPELRSRLQKLNSEGELVDCGTSAQKLLSLLQRDTFQSGAHVDFYDI</sequence>